<keyword id="KW-0328">Glycosyltransferase</keyword>
<keyword id="KW-1185">Reference proteome</keyword>
<keyword id="KW-0804">Transcription</keyword>
<keyword id="KW-0805">Transcription regulation</keyword>
<keyword id="KW-0808">Transferase</keyword>
<accession>P65942</accession>
<accession>A0A1R3XY73</accession>
<accession>P71807</accession>
<accession>X2BHH2</accession>
<evidence type="ECO:0000250" key="1"/>
<evidence type="ECO:0000255" key="2">
    <source>
        <dbReference type="HAMAP-Rule" id="MF_01219"/>
    </source>
</evidence>
<gene>
    <name evidence="2" type="primary">pyrR</name>
    <name type="ordered locus">BQ2027_MB1414</name>
</gene>
<sequence>MGAAGDAAIGRESRELMSAADVGRTISRIAHQIIEKTALDDPVGPDAPRVVLLGIPTRGVTLANRLAGNITEYSGIHVGHGALDITLYRDDLMIKPPRPLASTSIPAGGIDDALVILVDDVLYSGRSVRSALDALRDVGRPRAVQLAVLVDRGHRELPLRADYVGKNVPTSRSESVHVRLREHDGRDGVVISR</sequence>
<protein>
    <recommendedName>
        <fullName evidence="2">Bifunctional protein PyrR</fullName>
    </recommendedName>
    <domain>
        <recommendedName>
            <fullName evidence="2">Pyrimidine operon regulatory protein</fullName>
        </recommendedName>
    </domain>
    <domain>
        <recommendedName>
            <fullName evidence="2">Uracil phosphoribosyltransferase</fullName>
            <shortName evidence="2">UPRTase</shortName>
            <ecNumber evidence="2">2.4.2.9</ecNumber>
        </recommendedName>
    </domain>
</protein>
<proteinExistence type="inferred from homology"/>
<feature type="chain" id="PRO_0000183047" description="Bifunctional protein PyrR">
    <location>
        <begin position="1"/>
        <end position="193"/>
    </location>
</feature>
<feature type="short sequence motif" description="PRPP-binding" evidence="2">
    <location>
        <begin position="115"/>
        <end position="127"/>
    </location>
</feature>
<feature type="binding site" description="in other chain" evidence="1">
    <location>
        <begin position="57"/>
        <end position="58"/>
    </location>
    <ligand>
        <name>substrate</name>
        <note>ligand shared between dimeric partners</note>
    </ligand>
</feature>
<feature type="binding site" evidence="1">
    <location>
        <position position="98"/>
    </location>
    <ligand>
        <name>substrate</name>
        <note>ligand shared between dimeric partners</note>
    </ligand>
</feature>
<feature type="binding site" description="in other chain" evidence="1">
    <location>
        <begin position="119"/>
        <end position="127"/>
    </location>
    <ligand>
        <name>substrate</name>
        <note>ligand shared between dimeric partners</note>
    </ligand>
</feature>
<feature type="binding site" description="in other chain" evidence="1">
    <location>
        <position position="152"/>
    </location>
    <ligand>
        <name>substrate</name>
        <note>ligand shared between dimeric partners</note>
    </ligand>
</feature>
<feature type="binding site" description="in other chain" evidence="1">
    <location>
        <position position="176"/>
    </location>
    <ligand>
        <name>substrate</name>
        <note>ligand shared between dimeric partners</note>
    </ligand>
</feature>
<name>PYRR_MYCBO</name>
<reference key="1">
    <citation type="journal article" date="2003" name="Proc. Natl. Acad. Sci. U.S.A.">
        <title>The complete genome sequence of Mycobacterium bovis.</title>
        <authorList>
            <person name="Garnier T."/>
            <person name="Eiglmeier K."/>
            <person name="Camus J.-C."/>
            <person name="Medina N."/>
            <person name="Mansoor H."/>
            <person name="Pryor M."/>
            <person name="Duthoy S."/>
            <person name="Grondin S."/>
            <person name="Lacroix C."/>
            <person name="Monsempe C."/>
            <person name="Simon S."/>
            <person name="Harris B."/>
            <person name="Atkin R."/>
            <person name="Doggett J."/>
            <person name="Mayes R."/>
            <person name="Keating L."/>
            <person name="Wheeler P.R."/>
            <person name="Parkhill J."/>
            <person name="Barrell B.G."/>
            <person name="Cole S.T."/>
            <person name="Gordon S.V."/>
            <person name="Hewinson R.G."/>
        </authorList>
    </citation>
    <scope>NUCLEOTIDE SEQUENCE [LARGE SCALE GENOMIC DNA]</scope>
    <source>
        <strain>ATCC BAA-935 / AF2122/97</strain>
    </source>
</reference>
<reference key="2">
    <citation type="journal article" date="2017" name="Genome Announc.">
        <title>Updated reference genome sequence and annotation of Mycobacterium bovis AF2122/97.</title>
        <authorList>
            <person name="Malone K.M."/>
            <person name="Farrell D."/>
            <person name="Stuber T.P."/>
            <person name="Schubert O.T."/>
            <person name="Aebersold R."/>
            <person name="Robbe-Austerman S."/>
            <person name="Gordon S.V."/>
        </authorList>
    </citation>
    <scope>NUCLEOTIDE SEQUENCE [LARGE SCALE GENOMIC DNA]</scope>
    <scope>GENOME REANNOTATION</scope>
    <source>
        <strain>ATCC BAA-935 / AF2122/97</strain>
    </source>
</reference>
<comment type="function">
    <text evidence="2">Regulates the transcription of the pyrimidine nucleotide (pyr) operon in response to exogenous pyrimidines.</text>
</comment>
<comment type="function">
    <text evidence="2">Also displays a weak uracil phosphoribosyltransferase activity which is not physiologically significant.</text>
</comment>
<comment type="catalytic activity">
    <reaction evidence="2">
        <text>UMP + diphosphate = 5-phospho-alpha-D-ribose 1-diphosphate + uracil</text>
        <dbReference type="Rhea" id="RHEA:13017"/>
        <dbReference type="ChEBI" id="CHEBI:17568"/>
        <dbReference type="ChEBI" id="CHEBI:33019"/>
        <dbReference type="ChEBI" id="CHEBI:57865"/>
        <dbReference type="ChEBI" id="CHEBI:58017"/>
        <dbReference type="EC" id="2.4.2.9"/>
    </reaction>
</comment>
<comment type="similarity">
    <text evidence="2">Belongs to the purine/pyrimidine phosphoribosyltransferase family. PyrR subfamily.</text>
</comment>
<organism>
    <name type="scientific">Mycobacterium bovis (strain ATCC BAA-935 / AF2122/97)</name>
    <dbReference type="NCBI Taxonomy" id="233413"/>
    <lineage>
        <taxon>Bacteria</taxon>
        <taxon>Bacillati</taxon>
        <taxon>Actinomycetota</taxon>
        <taxon>Actinomycetes</taxon>
        <taxon>Mycobacteriales</taxon>
        <taxon>Mycobacteriaceae</taxon>
        <taxon>Mycobacterium</taxon>
        <taxon>Mycobacterium tuberculosis complex</taxon>
    </lineage>
</organism>
<dbReference type="EC" id="2.4.2.9" evidence="2"/>
<dbReference type="EMBL" id="LT708304">
    <property type="protein sequence ID" value="SIU00017.1"/>
    <property type="molecule type" value="Genomic_DNA"/>
</dbReference>
<dbReference type="RefSeq" id="NP_855066.1">
    <property type="nucleotide sequence ID" value="NC_002945.3"/>
</dbReference>
<dbReference type="RefSeq" id="WP_003407196.1">
    <property type="nucleotide sequence ID" value="NC_002945.4"/>
</dbReference>
<dbReference type="SMR" id="P65942"/>
<dbReference type="KEGG" id="mbo:BQ2027_MB1414"/>
<dbReference type="PATRIC" id="fig|233413.5.peg.1549"/>
<dbReference type="Proteomes" id="UP000001419">
    <property type="component" value="Chromosome"/>
</dbReference>
<dbReference type="GO" id="GO:0004845">
    <property type="term" value="F:uracil phosphoribosyltransferase activity"/>
    <property type="evidence" value="ECO:0007669"/>
    <property type="project" value="UniProtKB-UniRule"/>
</dbReference>
<dbReference type="GO" id="GO:0006355">
    <property type="term" value="P:regulation of DNA-templated transcription"/>
    <property type="evidence" value="ECO:0007669"/>
    <property type="project" value="UniProtKB-UniRule"/>
</dbReference>
<dbReference type="CDD" id="cd06223">
    <property type="entry name" value="PRTases_typeI"/>
    <property type="match status" value="1"/>
</dbReference>
<dbReference type="FunFam" id="3.40.50.2020:FF:000020">
    <property type="entry name" value="Bifunctional protein PyrR"/>
    <property type="match status" value="1"/>
</dbReference>
<dbReference type="Gene3D" id="3.40.50.2020">
    <property type="match status" value="1"/>
</dbReference>
<dbReference type="HAMAP" id="MF_01219">
    <property type="entry name" value="PyrR"/>
    <property type="match status" value="1"/>
</dbReference>
<dbReference type="InterPro" id="IPR000836">
    <property type="entry name" value="PRibTrfase_dom"/>
</dbReference>
<dbReference type="InterPro" id="IPR029057">
    <property type="entry name" value="PRTase-like"/>
</dbReference>
<dbReference type="InterPro" id="IPR023050">
    <property type="entry name" value="PyrR"/>
</dbReference>
<dbReference type="InterPro" id="IPR050137">
    <property type="entry name" value="PyrR_bifunctional"/>
</dbReference>
<dbReference type="NCBIfam" id="NF003547">
    <property type="entry name" value="PRK05205.1-3"/>
    <property type="match status" value="1"/>
</dbReference>
<dbReference type="NCBIfam" id="NF003549">
    <property type="entry name" value="PRK05205.1-5"/>
    <property type="match status" value="1"/>
</dbReference>
<dbReference type="PANTHER" id="PTHR11608">
    <property type="entry name" value="BIFUNCTIONAL PROTEIN PYRR"/>
    <property type="match status" value="1"/>
</dbReference>
<dbReference type="PANTHER" id="PTHR11608:SF0">
    <property type="entry name" value="BIFUNCTIONAL PROTEIN PYRR"/>
    <property type="match status" value="1"/>
</dbReference>
<dbReference type="Pfam" id="PF00156">
    <property type="entry name" value="Pribosyltran"/>
    <property type="match status" value="1"/>
</dbReference>
<dbReference type="SUPFAM" id="SSF53271">
    <property type="entry name" value="PRTase-like"/>
    <property type="match status" value="1"/>
</dbReference>